<evidence type="ECO:0000256" key="1">
    <source>
        <dbReference type="SAM" id="MobiDB-lite"/>
    </source>
</evidence>
<evidence type="ECO:0000305" key="2"/>
<keyword id="KW-0025">Alternative splicing</keyword>
<keyword id="KW-1185">Reference proteome</keyword>
<keyword id="KW-0677">Repeat</keyword>
<gene>
    <name type="ordered locus">At2g17670</name>
    <name type="ORF">T17A5.11</name>
</gene>
<reference key="1">
    <citation type="journal article" date="1999" name="Nature">
        <title>Sequence and analysis of chromosome 2 of the plant Arabidopsis thaliana.</title>
        <authorList>
            <person name="Lin X."/>
            <person name="Kaul S."/>
            <person name="Rounsley S.D."/>
            <person name="Shea T.P."/>
            <person name="Benito M.-I."/>
            <person name="Town C.D."/>
            <person name="Fujii C.Y."/>
            <person name="Mason T.M."/>
            <person name="Bowman C.L."/>
            <person name="Barnstead M.E."/>
            <person name="Feldblyum T.V."/>
            <person name="Buell C.R."/>
            <person name="Ketchum K.A."/>
            <person name="Lee J.J."/>
            <person name="Ronning C.M."/>
            <person name="Koo H.L."/>
            <person name="Moffat K.S."/>
            <person name="Cronin L.A."/>
            <person name="Shen M."/>
            <person name="Pai G."/>
            <person name="Van Aken S."/>
            <person name="Umayam L."/>
            <person name="Tallon L.J."/>
            <person name="Gill J.E."/>
            <person name="Adams M.D."/>
            <person name="Carrera A.J."/>
            <person name="Creasy T.H."/>
            <person name="Goodman H.M."/>
            <person name="Somerville C.R."/>
            <person name="Copenhaver G.P."/>
            <person name="Preuss D."/>
            <person name="Nierman W.C."/>
            <person name="White O."/>
            <person name="Eisen J.A."/>
            <person name="Salzberg S.L."/>
            <person name="Fraser C.M."/>
            <person name="Venter J.C."/>
        </authorList>
    </citation>
    <scope>NUCLEOTIDE SEQUENCE [LARGE SCALE GENOMIC DNA]</scope>
    <source>
        <strain>cv. Columbia</strain>
    </source>
</reference>
<reference key="2">
    <citation type="journal article" date="2017" name="Plant J.">
        <title>Araport11: a complete reannotation of the Arabidopsis thaliana reference genome.</title>
        <authorList>
            <person name="Cheng C.Y."/>
            <person name="Krishnakumar V."/>
            <person name="Chan A.P."/>
            <person name="Thibaud-Nissen F."/>
            <person name="Schobel S."/>
            <person name="Town C.D."/>
        </authorList>
    </citation>
    <scope>GENOME REANNOTATION</scope>
    <source>
        <strain>cv. Columbia</strain>
    </source>
</reference>
<reference key="3">
    <citation type="journal article" date="2003" name="Science">
        <title>Empirical analysis of transcriptional activity in the Arabidopsis genome.</title>
        <authorList>
            <person name="Yamada K."/>
            <person name="Lim J."/>
            <person name="Dale J.M."/>
            <person name="Chen H."/>
            <person name="Shinn P."/>
            <person name="Palm C.J."/>
            <person name="Southwick A.M."/>
            <person name="Wu H.C."/>
            <person name="Kim C.J."/>
            <person name="Nguyen M."/>
            <person name="Pham P.K."/>
            <person name="Cheuk R.F."/>
            <person name="Karlin-Newmann G."/>
            <person name="Liu S.X."/>
            <person name="Lam B."/>
            <person name="Sakano H."/>
            <person name="Wu T."/>
            <person name="Yu G."/>
            <person name="Miranda M."/>
            <person name="Quach H.L."/>
            <person name="Tripp M."/>
            <person name="Chang C.H."/>
            <person name="Lee J.M."/>
            <person name="Toriumi M.J."/>
            <person name="Chan M.M."/>
            <person name="Tang C.C."/>
            <person name="Onodera C.S."/>
            <person name="Deng J.M."/>
            <person name="Akiyama K."/>
            <person name="Ansari Y."/>
            <person name="Arakawa T."/>
            <person name="Banh J."/>
            <person name="Banno F."/>
            <person name="Bowser L."/>
            <person name="Brooks S.Y."/>
            <person name="Carninci P."/>
            <person name="Chao Q."/>
            <person name="Choy N."/>
            <person name="Enju A."/>
            <person name="Goldsmith A.D."/>
            <person name="Gurjal M."/>
            <person name="Hansen N.F."/>
            <person name="Hayashizaki Y."/>
            <person name="Johnson-Hopson C."/>
            <person name="Hsuan V.W."/>
            <person name="Iida K."/>
            <person name="Karnes M."/>
            <person name="Khan S."/>
            <person name="Koesema E."/>
            <person name="Ishida J."/>
            <person name="Jiang P.X."/>
            <person name="Jones T."/>
            <person name="Kawai J."/>
            <person name="Kamiya A."/>
            <person name="Meyers C."/>
            <person name="Nakajima M."/>
            <person name="Narusaka M."/>
            <person name="Seki M."/>
            <person name="Sakurai T."/>
            <person name="Satou M."/>
            <person name="Tamse R."/>
            <person name="Vaysberg M."/>
            <person name="Wallender E.K."/>
            <person name="Wong C."/>
            <person name="Yamamura Y."/>
            <person name="Yuan S."/>
            <person name="Shinozaki K."/>
            <person name="Davis R.W."/>
            <person name="Theologis A."/>
            <person name="Ecker J.R."/>
        </authorList>
    </citation>
    <scope>NUCLEOTIDE SEQUENCE [LARGE SCALE MRNA]</scope>
    <source>
        <strain>cv. Columbia</strain>
    </source>
</reference>
<reference key="4">
    <citation type="submission" date="2002-03" db="EMBL/GenBank/DDBJ databases">
        <title>Full-length cDNA from Arabidopsis thaliana.</title>
        <authorList>
            <person name="Brover V.V."/>
            <person name="Troukhan M.E."/>
            <person name="Alexandrov N.A."/>
            <person name="Lu Y.-P."/>
            <person name="Flavell R.B."/>
            <person name="Feldmann K.A."/>
        </authorList>
    </citation>
    <scope>NUCLEOTIDE SEQUENCE [LARGE SCALE MRNA]</scope>
</reference>
<reference key="5">
    <citation type="journal article" date="2004" name="Plant Cell">
        <title>Genome-wide analysis of Arabidopsis pentatricopeptide repeat proteins reveals their essential role in organelle biogenesis.</title>
        <authorList>
            <person name="Lurin C."/>
            <person name="Andres C."/>
            <person name="Aubourg S."/>
            <person name="Bellaoui M."/>
            <person name="Bitton F."/>
            <person name="Bruyere C."/>
            <person name="Caboche M."/>
            <person name="Debast C."/>
            <person name="Gualberto J."/>
            <person name="Hoffmann B."/>
            <person name="Lecharny A."/>
            <person name="Le Ret M."/>
            <person name="Martin-Magniette M.-L."/>
            <person name="Mireau H."/>
            <person name="Peeters N."/>
            <person name="Renou J.-P."/>
            <person name="Szurek B."/>
            <person name="Taconnat L."/>
            <person name="Small I."/>
        </authorList>
    </citation>
    <scope>GENE FAMILY</scope>
</reference>
<sequence length="463" mass="51408">MGKVPSSFRSMPANLLVRKTTPSPPAPPRDFRNRTAVGGDSAKLPQNTQAPREPSLRNPFKSPNLSDAKSLFNSIAATSRIPLDLKFHNSVLQSYGSIAVVNDTVKLFQHILKSQPNFRPGRSTFLILLSHACRAPDSSISNVHRVLNLMVNNGLEPDQVTTDIAVRSLCETGRVDEAKDLMKELTEKHSPPDTYTYNFLLKHLCKCKDLHVVYEFVDEMRDDFDVKPDLVSFTILIDNVCNSKNLREAMYLVSKLGNAGFKPDCFLYNTIMKGFCTLSKGSEAVGVYKKMKEEGVEPDQITYNTLIFGLSKAGRVEEARMYLKTMVDAGYEPDTATYTSLMNGMCRKGESLGALSLLEEMEARGCAPNDCTYNTLLHGLCKARLMDKGMELYEMMKSSGVKLESNGYATLVRSLVKSGKVAEAYEVFDYAVDSKSLSDASAYSTLETTLKWLKKAKEQGLVP</sequence>
<dbReference type="EMBL" id="CP002685">
    <property type="protein sequence ID" value="AEC06664.1"/>
    <property type="molecule type" value="Genomic_DNA"/>
</dbReference>
<dbReference type="EMBL" id="BT004095">
    <property type="protein sequence ID" value="AAO42121.1"/>
    <property type="molecule type" value="mRNA"/>
</dbReference>
<dbReference type="EMBL" id="BT005703">
    <property type="protein sequence ID" value="AAO64123.1"/>
    <property type="molecule type" value="mRNA"/>
</dbReference>
<dbReference type="EMBL" id="AY085478">
    <property type="protein sequence ID" value="AAM62704.1"/>
    <property type="molecule type" value="mRNA"/>
</dbReference>
<dbReference type="PIR" id="A84555">
    <property type="entry name" value="A84555"/>
</dbReference>
<dbReference type="PIR" id="T08865">
    <property type="entry name" value="T08865"/>
</dbReference>
<dbReference type="RefSeq" id="NP_565422.1">
    <molecule id="Q84J71-1"/>
    <property type="nucleotide sequence ID" value="NM_127321.3"/>
</dbReference>
<dbReference type="SMR" id="Q84J71"/>
<dbReference type="BioGRID" id="1631">
    <property type="interactions" value="9"/>
</dbReference>
<dbReference type="FunCoup" id="Q84J71">
    <property type="interactions" value="438"/>
</dbReference>
<dbReference type="IntAct" id="Q84J71">
    <property type="interactions" value="9"/>
</dbReference>
<dbReference type="PaxDb" id="3702-AT2G17670.1"/>
<dbReference type="ProteomicsDB" id="249137">
    <molecule id="Q84J71-1"/>
</dbReference>
<dbReference type="EnsemblPlants" id="AT2G17670.1">
    <molecule id="Q84J71-1"/>
    <property type="protein sequence ID" value="AT2G17670.1"/>
    <property type="gene ID" value="AT2G17670"/>
</dbReference>
<dbReference type="GeneID" id="816274"/>
<dbReference type="Gramene" id="AT2G17670.1">
    <molecule id="Q84J71-1"/>
    <property type="protein sequence ID" value="AT2G17670.1"/>
    <property type="gene ID" value="AT2G17670"/>
</dbReference>
<dbReference type="KEGG" id="ath:AT2G17670"/>
<dbReference type="Araport" id="AT2G17670"/>
<dbReference type="TAIR" id="AT2G17670"/>
<dbReference type="eggNOG" id="KOG4197">
    <property type="taxonomic scope" value="Eukaryota"/>
</dbReference>
<dbReference type="InParanoid" id="Q84J71"/>
<dbReference type="OMA" id="CKARLMD"/>
<dbReference type="PhylomeDB" id="Q84J71"/>
<dbReference type="PRO" id="PR:Q84J71"/>
<dbReference type="Proteomes" id="UP000006548">
    <property type="component" value="Chromosome 2"/>
</dbReference>
<dbReference type="ExpressionAtlas" id="Q84J71">
    <property type="expression patterns" value="baseline and differential"/>
</dbReference>
<dbReference type="Gene3D" id="1.25.40.10">
    <property type="entry name" value="Tetratricopeptide repeat domain"/>
    <property type="match status" value="3"/>
</dbReference>
<dbReference type="InterPro" id="IPR002885">
    <property type="entry name" value="Pentatricopeptide_rpt"/>
</dbReference>
<dbReference type="InterPro" id="IPR033443">
    <property type="entry name" value="PROP1-like_PPR_dom"/>
</dbReference>
<dbReference type="InterPro" id="IPR011990">
    <property type="entry name" value="TPR-like_helical_dom_sf"/>
</dbReference>
<dbReference type="NCBIfam" id="TIGR00756">
    <property type="entry name" value="PPR"/>
    <property type="match status" value="7"/>
</dbReference>
<dbReference type="PANTHER" id="PTHR47941">
    <property type="entry name" value="PENTATRICOPEPTIDE REPEAT-CONTAINING PROTEIN 3, MITOCHONDRIAL"/>
    <property type="match status" value="1"/>
</dbReference>
<dbReference type="Pfam" id="PF01535">
    <property type="entry name" value="PPR"/>
    <property type="match status" value="1"/>
</dbReference>
<dbReference type="Pfam" id="PF13041">
    <property type="entry name" value="PPR_2"/>
    <property type="match status" value="1"/>
</dbReference>
<dbReference type="Pfam" id="PF17177">
    <property type="entry name" value="PPR_long"/>
    <property type="match status" value="1"/>
</dbReference>
<dbReference type="PROSITE" id="PS51375">
    <property type="entry name" value="PPR"/>
    <property type="match status" value="10"/>
</dbReference>
<accession>Q84J71</accession>
<accession>Q8LED8</accession>
<organism>
    <name type="scientific">Arabidopsis thaliana</name>
    <name type="common">Mouse-ear cress</name>
    <dbReference type="NCBI Taxonomy" id="3702"/>
    <lineage>
        <taxon>Eukaryota</taxon>
        <taxon>Viridiplantae</taxon>
        <taxon>Streptophyta</taxon>
        <taxon>Embryophyta</taxon>
        <taxon>Tracheophyta</taxon>
        <taxon>Spermatophyta</taxon>
        <taxon>Magnoliopsida</taxon>
        <taxon>eudicotyledons</taxon>
        <taxon>Gunneridae</taxon>
        <taxon>Pentapetalae</taxon>
        <taxon>rosids</taxon>
        <taxon>malvids</taxon>
        <taxon>Brassicales</taxon>
        <taxon>Brassicaceae</taxon>
        <taxon>Camelineae</taxon>
        <taxon>Arabidopsis</taxon>
    </lineage>
</organism>
<proteinExistence type="evidence at protein level"/>
<feature type="chain" id="PRO_0000356020" description="Pentatricopeptide repeat-containing protein At2g17670">
    <location>
        <begin position="1"/>
        <end position="463"/>
    </location>
</feature>
<feature type="repeat" description="PPR 1">
    <location>
        <begin position="121"/>
        <end position="157"/>
    </location>
</feature>
<feature type="repeat" description="PPR 2">
    <location>
        <begin position="158"/>
        <end position="192"/>
    </location>
</feature>
<feature type="repeat" description="PPR 3">
    <location>
        <begin position="193"/>
        <end position="223"/>
    </location>
</feature>
<feature type="repeat" description="PPR 4">
    <location>
        <begin position="229"/>
        <end position="263"/>
    </location>
</feature>
<feature type="repeat" description="PPR 5">
    <location>
        <begin position="264"/>
        <end position="298"/>
    </location>
</feature>
<feature type="repeat" description="PPR 6">
    <location>
        <begin position="299"/>
        <end position="333"/>
    </location>
</feature>
<feature type="repeat" description="PPR 7">
    <location>
        <begin position="334"/>
        <end position="368"/>
    </location>
</feature>
<feature type="repeat" description="PPR 8">
    <location>
        <begin position="369"/>
        <end position="403"/>
    </location>
</feature>
<feature type="repeat" description="PPR 9">
    <location>
        <begin position="404"/>
        <end position="438"/>
    </location>
</feature>
<feature type="region of interest" description="Disordered" evidence="1">
    <location>
        <begin position="1"/>
        <end position="63"/>
    </location>
</feature>
<feature type="sequence conflict" description="In Ref. 4; AAM62704." evidence="2" ref="4">
    <original>M</original>
    <variation>I</variation>
    <location>
        <position position="11"/>
    </location>
</feature>
<feature type="sequence conflict" description="In Ref. 4; AAM62704." evidence="2" ref="4">
    <original>Q</original>
    <variation>H</variation>
    <location>
        <position position="46"/>
    </location>
</feature>
<feature type="sequence conflict" description="In Ref. 4; AAM62704." evidence="2" ref="4">
    <original>G</original>
    <variation>A</variation>
    <location>
        <position position="96"/>
    </location>
</feature>
<feature type="sequence conflict" description="In Ref. 4; AAM62704." evidence="2" ref="4">
    <original>N</original>
    <variation>D</variation>
    <location>
        <position position="102"/>
    </location>
</feature>
<feature type="sequence conflict" description="In Ref. 4; AAM62704." evidence="2" ref="4">
    <original>L</original>
    <variation>F</variation>
    <location>
        <position position="107"/>
    </location>
</feature>
<feature type="sequence conflict" description="In Ref. 4; AAM62704." evidence="2" ref="4">
    <original>L</original>
    <variation>M</variation>
    <location>
        <position position="112"/>
    </location>
</feature>
<comment type="interaction">
    <interactant intactId="EBI-4426341">
        <id>Q84J71</id>
    </interactant>
    <interactant intactId="EBI-25506855">
        <id>O23160</id>
        <label>MYB73</label>
    </interactant>
    <organismsDiffer>false</organismsDiffer>
    <experiments>3</experiments>
</comment>
<comment type="alternative products">
    <event type="alternative splicing"/>
    <isoform>
        <id>Q84J71-1</id>
        <name>1</name>
        <sequence type="displayed"/>
    </isoform>
    <text>A number of isoforms are produced. According to EST sequences.</text>
</comment>
<comment type="similarity">
    <text evidence="2">Belongs to the PPR family. P subfamily.</text>
</comment>
<comment type="online information" name="Pentatricopeptide repeat proteins">
    <link uri="https://ppr.plantenergy.uwa.edu.au"/>
</comment>
<protein>
    <recommendedName>
        <fullName>Pentatricopeptide repeat-containing protein At2g17670</fullName>
    </recommendedName>
</protein>
<name>PP161_ARATH</name>